<feature type="chain" id="PRO_0000176295" description="Elongation factor 4">
    <location>
        <begin position="1"/>
        <end position="653"/>
    </location>
</feature>
<feature type="domain" description="tr-type G">
    <location>
        <begin position="50"/>
        <end position="231"/>
    </location>
</feature>
<feature type="region of interest" description="Disordered" evidence="2">
    <location>
        <begin position="1"/>
        <end position="30"/>
    </location>
</feature>
<feature type="binding site" evidence="1">
    <location>
        <begin position="62"/>
        <end position="67"/>
    </location>
    <ligand>
        <name>GTP</name>
        <dbReference type="ChEBI" id="CHEBI:37565"/>
    </ligand>
</feature>
<feature type="binding site" evidence="1">
    <location>
        <begin position="178"/>
        <end position="181"/>
    </location>
    <ligand>
        <name>GTP</name>
        <dbReference type="ChEBI" id="CHEBI:37565"/>
    </ligand>
</feature>
<dbReference type="EC" id="3.6.5.n1" evidence="1"/>
<dbReference type="EMBL" id="LT708304">
    <property type="protein sequence ID" value="SIU01042.1"/>
    <property type="molecule type" value="Genomic_DNA"/>
</dbReference>
<dbReference type="RefSeq" id="NP_856076.1">
    <property type="nucleotide sequence ID" value="NC_002945.3"/>
</dbReference>
<dbReference type="RefSeq" id="WP_003900516.1">
    <property type="nucleotide sequence ID" value="NC_002945.4"/>
</dbReference>
<dbReference type="SMR" id="P65270"/>
<dbReference type="GeneID" id="45426394"/>
<dbReference type="KEGG" id="mbo:BQ2027_MB2427C"/>
<dbReference type="PATRIC" id="fig|233413.5.peg.2668"/>
<dbReference type="Proteomes" id="UP000001419">
    <property type="component" value="Chromosome"/>
</dbReference>
<dbReference type="GO" id="GO:0005886">
    <property type="term" value="C:plasma membrane"/>
    <property type="evidence" value="ECO:0007669"/>
    <property type="project" value="UniProtKB-SubCell"/>
</dbReference>
<dbReference type="GO" id="GO:0005525">
    <property type="term" value="F:GTP binding"/>
    <property type="evidence" value="ECO:0007669"/>
    <property type="project" value="UniProtKB-UniRule"/>
</dbReference>
<dbReference type="GO" id="GO:0003924">
    <property type="term" value="F:GTPase activity"/>
    <property type="evidence" value="ECO:0007669"/>
    <property type="project" value="UniProtKB-UniRule"/>
</dbReference>
<dbReference type="GO" id="GO:0043022">
    <property type="term" value="F:ribosome binding"/>
    <property type="evidence" value="ECO:0007669"/>
    <property type="project" value="UniProtKB-UniRule"/>
</dbReference>
<dbReference type="GO" id="GO:0003746">
    <property type="term" value="F:translation elongation factor activity"/>
    <property type="evidence" value="ECO:0007669"/>
    <property type="project" value="UniProtKB-UniRule"/>
</dbReference>
<dbReference type="GO" id="GO:0045727">
    <property type="term" value="P:positive regulation of translation"/>
    <property type="evidence" value="ECO:0007669"/>
    <property type="project" value="UniProtKB-UniRule"/>
</dbReference>
<dbReference type="CDD" id="cd03699">
    <property type="entry name" value="EF4_II"/>
    <property type="match status" value="1"/>
</dbReference>
<dbReference type="CDD" id="cd16260">
    <property type="entry name" value="EF4_III"/>
    <property type="match status" value="1"/>
</dbReference>
<dbReference type="CDD" id="cd01890">
    <property type="entry name" value="LepA"/>
    <property type="match status" value="1"/>
</dbReference>
<dbReference type="CDD" id="cd03709">
    <property type="entry name" value="lepA_C"/>
    <property type="match status" value="1"/>
</dbReference>
<dbReference type="FunFam" id="3.30.70.240:FF:000011">
    <property type="entry name" value="Elongation factor 4"/>
    <property type="match status" value="1"/>
</dbReference>
<dbReference type="FunFam" id="3.40.50.300:FF:000078">
    <property type="entry name" value="Elongation factor 4"/>
    <property type="match status" value="1"/>
</dbReference>
<dbReference type="FunFam" id="2.40.30.10:FF:000015">
    <property type="entry name" value="Translation factor GUF1, mitochondrial"/>
    <property type="match status" value="1"/>
</dbReference>
<dbReference type="FunFam" id="3.30.70.2570:FF:000001">
    <property type="entry name" value="Translation factor GUF1, mitochondrial"/>
    <property type="match status" value="1"/>
</dbReference>
<dbReference type="FunFam" id="3.30.70.870:FF:000004">
    <property type="entry name" value="Translation factor GUF1, mitochondrial"/>
    <property type="match status" value="1"/>
</dbReference>
<dbReference type="Gene3D" id="3.30.70.240">
    <property type="match status" value="1"/>
</dbReference>
<dbReference type="Gene3D" id="3.30.70.2570">
    <property type="entry name" value="Elongation factor 4, C-terminal domain"/>
    <property type="match status" value="1"/>
</dbReference>
<dbReference type="Gene3D" id="3.30.70.870">
    <property type="entry name" value="Elongation Factor G (Translational Gtpase), domain 3"/>
    <property type="match status" value="1"/>
</dbReference>
<dbReference type="Gene3D" id="3.40.50.300">
    <property type="entry name" value="P-loop containing nucleotide triphosphate hydrolases"/>
    <property type="match status" value="1"/>
</dbReference>
<dbReference type="Gene3D" id="2.40.30.10">
    <property type="entry name" value="Translation factors"/>
    <property type="match status" value="1"/>
</dbReference>
<dbReference type="HAMAP" id="MF_00071">
    <property type="entry name" value="LepA"/>
    <property type="match status" value="1"/>
</dbReference>
<dbReference type="InterPro" id="IPR006297">
    <property type="entry name" value="EF-4"/>
</dbReference>
<dbReference type="InterPro" id="IPR035647">
    <property type="entry name" value="EFG_III/V"/>
</dbReference>
<dbReference type="InterPro" id="IPR000640">
    <property type="entry name" value="EFG_V-like"/>
</dbReference>
<dbReference type="InterPro" id="IPR004161">
    <property type="entry name" value="EFTu-like_2"/>
</dbReference>
<dbReference type="InterPro" id="IPR031157">
    <property type="entry name" value="G_TR_CS"/>
</dbReference>
<dbReference type="InterPro" id="IPR038363">
    <property type="entry name" value="LepA_C_sf"/>
</dbReference>
<dbReference type="InterPro" id="IPR013842">
    <property type="entry name" value="LepA_CTD"/>
</dbReference>
<dbReference type="InterPro" id="IPR035654">
    <property type="entry name" value="LepA_IV"/>
</dbReference>
<dbReference type="InterPro" id="IPR027417">
    <property type="entry name" value="P-loop_NTPase"/>
</dbReference>
<dbReference type="InterPro" id="IPR005225">
    <property type="entry name" value="Small_GTP-bd"/>
</dbReference>
<dbReference type="InterPro" id="IPR000795">
    <property type="entry name" value="T_Tr_GTP-bd_dom"/>
</dbReference>
<dbReference type="InterPro" id="IPR009000">
    <property type="entry name" value="Transl_B-barrel_sf"/>
</dbReference>
<dbReference type="NCBIfam" id="TIGR01393">
    <property type="entry name" value="lepA"/>
    <property type="match status" value="1"/>
</dbReference>
<dbReference type="NCBIfam" id="TIGR00231">
    <property type="entry name" value="small_GTP"/>
    <property type="match status" value="1"/>
</dbReference>
<dbReference type="PANTHER" id="PTHR43512:SF4">
    <property type="entry name" value="TRANSLATION FACTOR GUF1 HOMOLOG, CHLOROPLASTIC"/>
    <property type="match status" value="1"/>
</dbReference>
<dbReference type="PANTHER" id="PTHR43512">
    <property type="entry name" value="TRANSLATION FACTOR GUF1-RELATED"/>
    <property type="match status" value="1"/>
</dbReference>
<dbReference type="Pfam" id="PF00679">
    <property type="entry name" value="EFG_C"/>
    <property type="match status" value="1"/>
</dbReference>
<dbReference type="Pfam" id="PF00009">
    <property type="entry name" value="GTP_EFTU"/>
    <property type="match status" value="1"/>
</dbReference>
<dbReference type="Pfam" id="PF03144">
    <property type="entry name" value="GTP_EFTU_D2"/>
    <property type="match status" value="1"/>
</dbReference>
<dbReference type="Pfam" id="PF06421">
    <property type="entry name" value="LepA_C"/>
    <property type="match status" value="1"/>
</dbReference>
<dbReference type="PRINTS" id="PR00315">
    <property type="entry name" value="ELONGATNFCT"/>
</dbReference>
<dbReference type="SMART" id="SM00838">
    <property type="entry name" value="EFG_C"/>
    <property type="match status" value="1"/>
</dbReference>
<dbReference type="SUPFAM" id="SSF54980">
    <property type="entry name" value="EF-G C-terminal domain-like"/>
    <property type="match status" value="2"/>
</dbReference>
<dbReference type="SUPFAM" id="SSF52540">
    <property type="entry name" value="P-loop containing nucleoside triphosphate hydrolases"/>
    <property type="match status" value="1"/>
</dbReference>
<dbReference type="SUPFAM" id="SSF50447">
    <property type="entry name" value="Translation proteins"/>
    <property type="match status" value="1"/>
</dbReference>
<dbReference type="PROSITE" id="PS00301">
    <property type="entry name" value="G_TR_1"/>
    <property type="match status" value="1"/>
</dbReference>
<dbReference type="PROSITE" id="PS51722">
    <property type="entry name" value="G_TR_2"/>
    <property type="match status" value="1"/>
</dbReference>
<keyword id="KW-1003">Cell membrane</keyword>
<keyword id="KW-0342">GTP-binding</keyword>
<keyword id="KW-0378">Hydrolase</keyword>
<keyword id="KW-0472">Membrane</keyword>
<keyword id="KW-0547">Nucleotide-binding</keyword>
<keyword id="KW-0648">Protein biosynthesis</keyword>
<keyword id="KW-1185">Reference proteome</keyword>
<name>LEPA_MYCBO</name>
<comment type="function">
    <text evidence="1">Required for accurate and efficient protein synthesis under certain stress conditions. May act as a fidelity factor of the translation reaction, by catalyzing a one-codon backward translocation of tRNAs on improperly translocated ribosomes. Back-translocation proceeds from a post-translocation (POST) complex to a pre-translocation (PRE) complex, thus giving elongation factor G a second chance to translocate the tRNAs correctly. Binds to ribosomes in a GTP-dependent manner.</text>
</comment>
<comment type="catalytic activity">
    <reaction evidence="1">
        <text>GTP + H2O = GDP + phosphate + H(+)</text>
        <dbReference type="Rhea" id="RHEA:19669"/>
        <dbReference type="ChEBI" id="CHEBI:15377"/>
        <dbReference type="ChEBI" id="CHEBI:15378"/>
        <dbReference type="ChEBI" id="CHEBI:37565"/>
        <dbReference type="ChEBI" id="CHEBI:43474"/>
        <dbReference type="ChEBI" id="CHEBI:58189"/>
        <dbReference type="EC" id="3.6.5.n1"/>
    </reaction>
</comment>
<comment type="subcellular location">
    <subcellularLocation>
        <location evidence="1">Cell membrane</location>
        <topology evidence="1">Peripheral membrane protein</topology>
        <orientation evidence="1">Cytoplasmic side</orientation>
    </subcellularLocation>
</comment>
<comment type="similarity">
    <text evidence="1">Belongs to the TRAFAC class translation factor GTPase superfamily. Classic translation factor GTPase family. LepA subfamily.</text>
</comment>
<organism>
    <name type="scientific">Mycobacterium bovis (strain ATCC BAA-935 / AF2122/97)</name>
    <dbReference type="NCBI Taxonomy" id="233413"/>
    <lineage>
        <taxon>Bacteria</taxon>
        <taxon>Bacillati</taxon>
        <taxon>Actinomycetota</taxon>
        <taxon>Actinomycetes</taxon>
        <taxon>Mycobacteriales</taxon>
        <taxon>Mycobacteriaceae</taxon>
        <taxon>Mycobacterium</taxon>
        <taxon>Mycobacterium tuberculosis complex</taxon>
    </lineage>
</organism>
<reference key="1">
    <citation type="journal article" date="2003" name="Proc. Natl. Acad. Sci. U.S.A.">
        <title>The complete genome sequence of Mycobacterium bovis.</title>
        <authorList>
            <person name="Garnier T."/>
            <person name="Eiglmeier K."/>
            <person name="Camus J.-C."/>
            <person name="Medina N."/>
            <person name="Mansoor H."/>
            <person name="Pryor M."/>
            <person name="Duthoy S."/>
            <person name="Grondin S."/>
            <person name="Lacroix C."/>
            <person name="Monsempe C."/>
            <person name="Simon S."/>
            <person name="Harris B."/>
            <person name="Atkin R."/>
            <person name="Doggett J."/>
            <person name="Mayes R."/>
            <person name="Keating L."/>
            <person name="Wheeler P.R."/>
            <person name="Parkhill J."/>
            <person name="Barrell B.G."/>
            <person name="Cole S.T."/>
            <person name="Gordon S.V."/>
            <person name="Hewinson R.G."/>
        </authorList>
    </citation>
    <scope>NUCLEOTIDE SEQUENCE [LARGE SCALE GENOMIC DNA]</scope>
    <source>
        <strain>ATCC BAA-935 / AF2122/97</strain>
    </source>
</reference>
<reference key="2">
    <citation type="journal article" date="2017" name="Genome Announc.">
        <title>Updated reference genome sequence and annotation of Mycobacterium bovis AF2122/97.</title>
        <authorList>
            <person name="Malone K.M."/>
            <person name="Farrell D."/>
            <person name="Stuber T.P."/>
            <person name="Schubert O.T."/>
            <person name="Aebersold R."/>
            <person name="Robbe-Austerman S."/>
            <person name="Gordon S.V."/>
        </authorList>
    </citation>
    <scope>NUCLEOTIDE SEQUENCE [LARGE SCALE GENOMIC DNA]</scope>
    <scope>GENOME REANNOTATION</scope>
    <source>
        <strain>ATCC BAA-935 / AF2122/97</strain>
    </source>
</reference>
<protein>
    <recommendedName>
        <fullName evidence="1">Elongation factor 4</fullName>
        <shortName evidence="1">EF-4</shortName>
        <ecNumber evidence="1">3.6.5.n1</ecNumber>
    </recommendedName>
    <alternativeName>
        <fullName evidence="1">Ribosomal back-translocase LepA</fullName>
    </alternativeName>
</protein>
<evidence type="ECO:0000255" key="1">
    <source>
        <dbReference type="HAMAP-Rule" id="MF_00071"/>
    </source>
</evidence>
<evidence type="ECO:0000256" key="2">
    <source>
        <dbReference type="SAM" id="MobiDB-lite"/>
    </source>
</evidence>
<sequence length="653" mass="72396">MRTPCSQHRRDRPSAIGSQLPDADTLDTRQPPLQEIPISSFADKTFTAPAQIRNFCIIAHIDHGKSTLADRMLQLTGVVDERSMRAQYLDRMDIERERGITIKAQNVRLPWRVDKTDYVLHLIDTPGHVDFTYEVSRALEACEGAVLLVDAAQGIEAQTLANLYLALDRDLHIIPVLNKIDLPAADPDRYAAEMAHIIGCEPAEVLRVSGKTGEGVSDLLDEVVRQVPPPQGDAEAPTRAMIFDSVYDIYRGVVTYVRVVDGKISPRERIMMMSTGATHELLEVGIVSPEPKPCEGLGVGEVGYLITGVKDVRQSKVGDTVTSLSRARGAAAEALTGYREPKPMVYSGLYPVDGSDYPNLRDALDKLQLNDAALTYEPETSVALGFGFRCGFLGLLHMEITRERLEREFGLDLISTSPNVVYRVHKDDGTEIRVTNPSDWPEGKIRTVYEPVVKTTIIAPSEFIGTIMELCQSRRGELGGMDYLSPERVELRYTMPLGEIIFDFFDALKSRTRGYASLDYEEAGEQEAALVKVDILLQGEAVDAFSAIVHKDTAYAYGNKMTTKLKELIPRQQFEVPVQAAIGSKIIARENIRAIRKDVLSKCYGGDITRKRKLLEKQKEGKKRMKTIGRVEVPQEAFVAALSTDAAGDKGKK</sequence>
<gene>
    <name evidence="1" type="primary">lepA</name>
    <name type="ordered locus">BQ2027_MB2427C</name>
</gene>
<proteinExistence type="inferred from homology"/>
<accession>P65270</accession>
<accession>A0A1R3Y152</accession>
<accession>P71739</accession>
<accession>X2BKZ6</accession>